<evidence type="ECO:0000255" key="1">
    <source>
        <dbReference type="HAMAP-Rule" id="MF_00294"/>
    </source>
</evidence>
<evidence type="ECO:0000305" key="2"/>
<name>RL33_DESHY</name>
<dbReference type="EMBL" id="AP008230">
    <property type="protein sequence ID" value="BAE82241.1"/>
    <property type="molecule type" value="Genomic_DNA"/>
</dbReference>
<dbReference type="RefSeq" id="WP_005810204.1">
    <property type="nucleotide sequence ID" value="NC_007907.1"/>
</dbReference>
<dbReference type="SMR" id="Q250Q1"/>
<dbReference type="STRING" id="138119.DSY0452"/>
<dbReference type="KEGG" id="dsy:DSY0452"/>
<dbReference type="eggNOG" id="COG0267">
    <property type="taxonomic scope" value="Bacteria"/>
</dbReference>
<dbReference type="HOGENOM" id="CLU_190949_0_2_9"/>
<dbReference type="Proteomes" id="UP000001946">
    <property type="component" value="Chromosome"/>
</dbReference>
<dbReference type="GO" id="GO:0005737">
    <property type="term" value="C:cytoplasm"/>
    <property type="evidence" value="ECO:0007669"/>
    <property type="project" value="UniProtKB-ARBA"/>
</dbReference>
<dbReference type="GO" id="GO:1990904">
    <property type="term" value="C:ribonucleoprotein complex"/>
    <property type="evidence" value="ECO:0007669"/>
    <property type="project" value="UniProtKB-KW"/>
</dbReference>
<dbReference type="GO" id="GO:0005840">
    <property type="term" value="C:ribosome"/>
    <property type="evidence" value="ECO:0007669"/>
    <property type="project" value="UniProtKB-KW"/>
</dbReference>
<dbReference type="GO" id="GO:0003735">
    <property type="term" value="F:structural constituent of ribosome"/>
    <property type="evidence" value="ECO:0007669"/>
    <property type="project" value="InterPro"/>
</dbReference>
<dbReference type="GO" id="GO:0006412">
    <property type="term" value="P:translation"/>
    <property type="evidence" value="ECO:0007669"/>
    <property type="project" value="UniProtKB-UniRule"/>
</dbReference>
<dbReference type="Gene3D" id="2.20.28.120">
    <property type="entry name" value="Ribosomal protein L33"/>
    <property type="match status" value="1"/>
</dbReference>
<dbReference type="HAMAP" id="MF_00294">
    <property type="entry name" value="Ribosomal_bL33"/>
    <property type="match status" value="1"/>
</dbReference>
<dbReference type="InterPro" id="IPR001705">
    <property type="entry name" value="Ribosomal_bL33"/>
</dbReference>
<dbReference type="InterPro" id="IPR018264">
    <property type="entry name" value="Ribosomal_bL33_CS"/>
</dbReference>
<dbReference type="InterPro" id="IPR038584">
    <property type="entry name" value="Ribosomal_bL33_sf"/>
</dbReference>
<dbReference type="InterPro" id="IPR011332">
    <property type="entry name" value="Ribosomal_zn-bd"/>
</dbReference>
<dbReference type="NCBIfam" id="NF001764">
    <property type="entry name" value="PRK00504.1"/>
    <property type="match status" value="1"/>
</dbReference>
<dbReference type="NCBIfam" id="NF001860">
    <property type="entry name" value="PRK00595.1"/>
    <property type="match status" value="1"/>
</dbReference>
<dbReference type="NCBIfam" id="TIGR01023">
    <property type="entry name" value="rpmG_bact"/>
    <property type="match status" value="1"/>
</dbReference>
<dbReference type="PANTHER" id="PTHR43168">
    <property type="entry name" value="50S RIBOSOMAL PROTEIN L33, CHLOROPLASTIC"/>
    <property type="match status" value="1"/>
</dbReference>
<dbReference type="PANTHER" id="PTHR43168:SF2">
    <property type="entry name" value="LARGE RIBOSOMAL SUBUNIT PROTEIN BL33C"/>
    <property type="match status" value="1"/>
</dbReference>
<dbReference type="Pfam" id="PF00471">
    <property type="entry name" value="Ribosomal_L33"/>
    <property type="match status" value="1"/>
</dbReference>
<dbReference type="SUPFAM" id="SSF57829">
    <property type="entry name" value="Zn-binding ribosomal proteins"/>
    <property type="match status" value="1"/>
</dbReference>
<dbReference type="PROSITE" id="PS00582">
    <property type="entry name" value="RIBOSOMAL_L33"/>
    <property type="match status" value="1"/>
</dbReference>
<gene>
    <name evidence="1" type="primary">rpmG</name>
    <name type="ordered locus">DSY0452</name>
</gene>
<comment type="similarity">
    <text evidence="1">Belongs to the bacterial ribosomal protein bL33 family.</text>
</comment>
<accession>Q250Q1</accession>
<reference key="1">
    <citation type="journal article" date="2006" name="J. Bacteriol.">
        <title>Complete genome sequence of the dehalorespiring bacterium Desulfitobacterium hafniense Y51 and comparison with Dehalococcoides ethenogenes 195.</title>
        <authorList>
            <person name="Nonaka H."/>
            <person name="Keresztes G."/>
            <person name="Shinoda Y."/>
            <person name="Ikenaga Y."/>
            <person name="Abe M."/>
            <person name="Naito K."/>
            <person name="Inatomi K."/>
            <person name="Furukawa K."/>
            <person name="Inui M."/>
            <person name="Yukawa H."/>
        </authorList>
    </citation>
    <scope>NUCLEOTIDE SEQUENCE [LARGE SCALE GENOMIC DNA]</scope>
    <source>
        <strain>Y51</strain>
    </source>
</reference>
<feature type="chain" id="PRO_0000356447" description="Large ribosomal subunit protein bL33">
    <location>
        <begin position="1"/>
        <end position="49"/>
    </location>
</feature>
<protein>
    <recommendedName>
        <fullName evidence="1">Large ribosomal subunit protein bL33</fullName>
    </recommendedName>
    <alternativeName>
        <fullName evidence="2">50S ribosomal protein L33</fullName>
    </alternativeName>
</protein>
<sequence>MRVGITLACTECKNRNYASIKNKKNNPDRLEVKKYCKFCKSHTAHKETK</sequence>
<keyword id="KW-1185">Reference proteome</keyword>
<keyword id="KW-0687">Ribonucleoprotein</keyword>
<keyword id="KW-0689">Ribosomal protein</keyword>
<organism>
    <name type="scientific">Desulfitobacterium hafniense (strain Y51)</name>
    <dbReference type="NCBI Taxonomy" id="138119"/>
    <lineage>
        <taxon>Bacteria</taxon>
        <taxon>Bacillati</taxon>
        <taxon>Bacillota</taxon>
        <taxon>Clostridia</taxon>
        <taxon>Eubacteriales</taxon>
        <taxon>Desulfitobacteriaceae</taxon>
        <taxon>Desulfitobacterium</taxon>
    </lineage>
</organism>
<proteinExistence type="inferred from homology"/>